<reference key="1">
    <citation type="journal article" date="1992" name="Dev. Biol.">
        <title>Developmental profiles of epidermal mRNAs during the pupal-adult molt of Tenebrio molitor and isolation of a cDNA clone encoding an adult cuticular protein: effects of a juvenile hormone analogue.</title>
        <authorList>
            <person name="Bouhin H."/>
            <person name="Charles J.-P."/>
            <person name="Quennedey B."/>
            <person name="Delachambre J."/>
        </authorList>
    </citation>
    <scope>NUCLEOTIDE SEQUENCE [MRNA]</scope>
</reference>
<reference key="2">
    <citation type="journal article" date="1993" name="Insect Mol. Biol.">
        <title>Nucleotide sequence of an adult-specific cuticular protein gene from the beetle Tenebrio molitor: effects of 20-hydroxyecdysone on mRNA accumulation.</title>
        <authorList>
            <person name="Bouhin H."/>
            <person name="Braquart C."/>
            <person name="Charles J.-P."/>
            <person name="Quennedey B."/>
            <person name="Delachambre J."/>
        </authorList>
    </citation>
    <scope>NUCLEOTIDE SEQUENCE [GENOMIC DNA]</scope>
</reference>
<feature type="signal peptide" evidence="1">
    <location>
        <begin position="1"/>
        <end position="19"/>
    </location>
</feature>
<feature type="chain" id="PRO_0000006415" description="Adult-specific cuticular protein ACP-22">
    <location>
        <begin position="20"/>
        <end position="199"/>
    </location>
</feature>
<feature type="domain" description="Chitin-binding type R&amp;R" evidence="2">
    <location>
        <begin position="133"/>
        <end position="199"/>
    </location>
</feature>
<feature type="region of interest" description="Disordered" evidence="3">
    <location>
        <begin position="63"/>
        <end position="103"/>
    </location>
</feature>
<feature type="compositionally biased region" description="Gly residues" evidence="3">
    <location>
        <begin position="82"/>
        <end position="102"/>
    </location>
</feature>
<feature type="sequence conflict" description="In Ref. 2; CAA51290." evidence="4" ref="2">
    <original>S</original>
    <variation>Y</variation>
    <location>
        <position position="138"/>
    </location>
</feature>
<gene>
    <name type="primary">ACP22</name>
</gene>
<organism>
    <name type="scientific">Tenebrio molitor</name>
    <name type="common">Yellow mealworm beetle</name>
    <dbReference type="NCBI Taxonomy" id="7067"/>
    <lineage>
        <taxon>Eukaryota</taxon>
        <taxon>Metazoa</taxon>
        <taxon>Ecdysozoa</taxon>
        <taxon>Arthropoda</taxon>
        <taxon>Hexapoda</taxon>
        <taxon>Insecta</taxon>
        <taxon>Pterygota</taxon>
        <taxon>Neoptera</taxon>
        <taxon>Endopterygota</taxon>
        <taxon>Coleoptera</taxon>
        <taxon>Polyphaga</taxon>
        <taxon>Cucujiformia</taxon>
        <taxon>Tenebrionidae</taxon>
        <taxon>Tenebrio</taxon>
    </lineage>
</organism>
<dbReference type="EMBL" id="X60455">
    <property type="protein sequence ID" value="CAA42985.1"/>
    <property type="molecule type" value="mRNA"/>
</dbReference>
<dbReference type="EMBL" id="X72783">
    <property type="protein sequence ID" value="CAA51290.1"/>
    <property type="molecule type" value="Genomic_DNA"/>
</dbReference>
<dbReference type="PIR" id="S16063">
    <property type="entry name" value="S16063"/>
</dbReference>
<dbReference type="PIR" id="S32224">
    <property type="entry name" value="S32224"/>
</dbReference>
<dbReference type="GO" id="GO:0031012">
    <property type="term" value="C:extracellular matrix"/>
    <property type="evidence" value="ECO:0007669"/>
    <property type="project" value="TreeGrafter"/>
</dbReference>
<dbReference type="GO" id="GO:0005615">
    <property type="term" value="C:extracellular space"/>
    <property type="evidence" value="ECO:0007669"/>
    <property type="project" value="TreeGrafter"/>
</dbReference>
<dbReference type="GO" id="GO:0042302">
    <property type="term" value="F:structural constituent of cuticle"/>
    <property type="evidence" value="ECO:0007669"/>
    <property type="project" value="UniProtKB-KW"/>
</dbReference>
<dbReference type="InterPro" id="IPR000618">
    <property type="entry name" value="Insect_cuticle"/>
</dbReference>
<dbReference type="InterPro" id="IPR051217">
    <property type="entry name" value="Insect_Cuticle_Struc_Prot"/>
</dbReference>
<dbReference type="PANTHER" id="PTHR12236:SF75">
    <property type="entry name" value="CUTICULAR PROTEIN 62BB, ISOFORM A"/>
    <property type="match status" value="1"/>
</dbReference>
<dbReference type="PANTHER" id="PTHR12236">
    <property type="entry name" value="STRUCTURAL CONTITUENT OF CUTICLE"/>
    <property type="match status" value="1"/>
</dbReference>
<dbReference type="Pfam" id="PF00379">
    <property type="entry name" value="Chitin_bind_4"/>
    <property type="match status" value="1"/>
</dbReference>
<dbReference type="PROSITE" id="PS51155">
    <property type="entry name" value="CHIT_BIND_RR_2"/>
    <property type="match status" value="1"/>
</dbReference>
<sequence length="199" mass="20710">MRLFIILSVASFGAIGVLSQGGGGGGAAGGLLEGGGGFEEYGHRSRGSIIGLSRGIEIGRHYGGGGGGGGEGEEGREHELRGGGLELGGGGGGGGGGGGGGGEGRHYEIGFGGSHFNTPVDVHHEEAIHLKAHPEYHSDYHVADHKTKDFKSKHEVRDGYKVKGTYSLLEPDHKTVRVVDYVSDKKRGFIARVSYRKHH</sequence>
<name>CU22_TENMO</name>
<accession>P26968</accession>
<accession>Q27015</accession>
<evidence type="ECO:0000255" key="1"/>
<evidence type="ECO:0000255" key="2">
    <source>
        <dbReference type="PROSITE-ProRule" id="PRU00497"/>
    </source>
</evidence>
<evidence type="ECO:0000256" key="3">
    <source>
        <dbReference type="SAM" id="MobiDB-lite"/>
    </source>
</evidence>
<evidence type="ECO:0000305" key="4"/>
<protein>
    <recommendedName>
        <fullName>Adult-specific cuticular protein ACP-22</fullName>
    </recommendedName>
</protein>
<proteinExistence type="evidence at transcript level"/>
<comment type="function">
    <text>Cuticular proteins play a significant role in determining the physical properties of cuticles.</text>
</comment>
<comment type="tissue specificity">
    <text>Epidermal regions synthesizing hard cuticle.</text>
</comment>
<comment type="developmental stage">
    <text>Preecdysial adult cuticle deposition.</text>
</comment>
<comment type="induction">
    <text>By 20-hydroxyecdysone.</text>
</comment>
<keyword id="KW-0193">Cuticle</keyword>
<keyword id="KW-0732">Signal</keyword>